<protein>
    <recommendedName>
        <fullName evidence="1">Ribonuclease 3</fullName>
        <ecNumber evidence="1">3.1.26.3</ecNumber>
    </recommendedName>
    <alternativeName>
        <fullName evidence="1">Ribonuclease III</fullName>
        <shortName evidence="1">RNase III</shortName>
    </alternativeName>
</protein>
<accession>Q0T1T8</accession>
<dbReference type="EC" id="3.1.26.3" evidence="1"/>
<dbReference type="EMBL" id="CP000266">
    <property type="protein sequence ID" value="ABF04727.1"/>
    <property type="molecule type" value="Genomic_DNA"/>
</dbReference>
<dbReference type="RefSeq" id="WP_001068343.1">
    <property type="nucleotide sequence ID" value="NC_008258.1"/>
</dbReference>
<dbReference type="SMR" id="Q0T1T8"/>
<dbReference type="GeneID" id="93774524"/>
<dbReference type="KEGG" id="sfv:SFV_2630"/>
<dbReference type="HOGENOM" id="CLU_000907_1_1_6"/>
<dbReference type="Proteomes" id="UP000000659">
    <property type="component" value="Chromosome"/>
</dbReference>
<dbReference type="GO" id="GO:0005737">
    <property type="term" value="C:cytoplasm"/>
    <property type="evidence" value="ECO:0007669"/>
    <property type="project" value="UniProtKB-SubCell"/>
</dbReference>
<dbReference type="GO" id="GO:0003725">
    <property type="term" value="F:double-stranded RNA binding"/>
    <property type="evidence" value="ECO:0007669"/>
    <property type="project" value="TreeGrafter"/>
</dbReference>
<dbReference type="GO" id="GO:0046872">
    <property type="term" value="F:metal ion binding"/>
    <property type="evidence" value="ECO:0007669"/>
    <property type="project" value="UniProtKB-KW"/>
</dbReference>
<dbReference type="GO" id="GO:0004525">
    <property type="term" value="F:ribonuclease III activity"/>
    <property type="evidence" value="ECO:0007669"/>
    <property type="project" value="UniProtKB-UniRule"/>
</dbReference>
<dbReference type="GO" id="GO:0019843">
    <property type="term" value="F:rRNA binding"/>
    <property type="evidence" value="ECO:0007669"/>
    <property type="project" value="UniProtKB-KW"/>
</dbReference>
<dbReference type="GO" id="GO:0006397">
    <property type="term" value="P:mRNA processing"/>
    <property type="evidence" value="ECO:0007669"/>
    <property type="project" value="UniProtKB-UniRule"/>
</dbReference>
<dbReference type="GO" id="GO:0010468">
    <property type="term" value="P:regulation of gene expression"/>
    <property type="evidence" value="ECO:0007669"/>
    <property type="project" value="TreeGrafter"/>
</dbReference>
<dbReference type="GO" id="GO:0006364">
    <property type="term" value="P:rRNA processing"/>
    <property type="evidence" value="ECO:0007669"/>
    <property type="project" value="UniProtKB-UniRule"/>
</dbReference>
<dbReference type="GO" id="GO:0008033">
    <property type="term" value="P:tRNA processing"/>
    <property type="evidence" value="ECO:0007669"/>
    <property type="project" value="UniProtKB-KW"/>
</dbReference>
<dbReference type="CDD" id="cd10845">
    <property type="entry name" value="DSRM_RNAse_III_family"/>
    <property type="match status" value="1"/>
</dbReference>
<dbReference type="CDD" id="cd00593">
    <property type="entry name" value="RIBOc"/>
    <property type="match status" value="1"/>
</dbReference>
<dbReference type="FunFam" id="1.10.1520.10:FF:000001">
    <property type="entry name" value="Ribonuclease 3"/>
    <property type="match status" value="1"/>
</dbReference>
<dbReference type="FunFam" id="3.30.160.20:FF:000003">
    <property type="entry name" value="Ribonuclease 3"/>
    <property type="match status" value="1"/>
</dbReference>
<dbReference type="Gene3D" id="3.30.160.20">
    <property type="match status" value="1"/>
</dbReference>
<dbReference type="Gene3D" id="1.10.1520.10">
    <property type="entry name" value="Ribonuclease III domain"/>
    <property type="match status" value="1"/>
</dbReference>
<dbReference type="HAMAP" id="MF_00104">
    <property type="entry name" value="RNase_III"/>
    <property type="match status" value="1"/>
</dbReference>
<dbReference type="InterPro" id="IPR014720">
    <property type="entry name" value="dsRBD_dom"/>
</dbReference>
<dbReference type="InterPro" id="IPR011907">
    <property type="entry name" value="RNase_III"/>
</dbReference>
<dbReference type="InterPro" id="IPR000999">
    <property type="entry name" value="RNase_III_dom"/>
</dbReference>
<dbReference type="InterPro" id="IPR036389">
    <property type="entry name" value="RNase_III_sf"/>
</dbReference>
<dbReference type="NCBIfam" id="TIGR02191">
    <property type="entry name" value="RNaseIII"/>
    <property type="match status" value="1"/>
</dbReference>
<dbReference type="PANTHER" id="PTHR11207:SF0">
    <property type="entry name" value="RIBONUCLEASE 3"/>
    <property type="match status" value="1"/>
</dbReference>
<dbReference type="PANTHER" id="PTHR11207">
    <property type="entry name" value="RIBONUCLEASE III"/>
    <property type="match status" value="1"/>
</dbReference>
<dbReference type="Pfam" id="PF00035">
    <property type="entry name" value="dsrm"/>
    <property type="match status" value="1"/>
</dbReference>
<dbReference type="Pfam" id="PF14622">
    <property type="entry name" value="Ribonucleas_3_3"/>
    <property type="match status" value="1"/>
</dbReference>
<dbReference type="SMART" id="SM00358">
    <property type="entry name" value="DSRM"/>
    <property type="match status" value="1"/>
</dbReference>
<dbReference type="SMART" id="SM00535">
    <property type="entry name" value="RIBOc"/>
    <property type="match status" value="1"/>
</dbReference>
<dbReference type="SUPFAM" id="SSF54768">
    <property type="entry name" value="dsRNA-binding domain-like"/>
    <property type="match status" value="1"/>
</dbReference>
<dbReference type="SUPFAM" id="SSF69065">
    <property type="entry name" value="RNase III domain-like"/>
    <property type="match status" value="1"/>
</dbReference>
<dbReference type="PROSITE" id="PS50137">
    <property type="entry name" value="DS_RBD"/>
    <property type="match status" value="1"/>
</dbReference>
<dbReference type="PROSITE" id="PS00517">
    <property type="entry name" value="RNASE_3_1"/>
    <property type="match status" value="1"/>
</dbReference>
<dbReference type="PROSITE" id="PS50142">
    <property type="entry name" value="RNASE_3_2"/>
    <property type="match status" value="1"/>
</dbReference>
<reference key="1">
    <citation type="journal article" date="2006" name="BMC Genomics">
        <title>Complete genome sequence of Shigella flexneri 5b and comparison with Shigella flexneri 2a.</title>
        <authorList>
            <person name="Nie H."/>
            <person name="Yang F."/>
            <person name="Zhang X."/>
            <person name="Yang J."/>
            <person name="Chen L."/>
            <person name="Wang J."/>
            <person name="Xiong Z."/>
            <person name="Peng J."/>
            <person name="Sun L."/>
            <person name="Dong J."/>
            <person name="Xue Y."/>
            <person name="Xu X."/>
            <person name="Chen S."/>
            <person name="Yao Z."/>
            <person name="Shen Y."/>
            <person name="Jin Q."/>
        </authorList>
    </citation>
    <scope>NUCLEOTIDE SEQUENCE [LARGE SCALE GENOMIC DNA]</scope>
    <source>
        <strain>8401</strain>
    </source>
</reference>
<sequence length="226" mass="25550">MNPIVINRLQRKLGYTFNHQELLQQALTHRSASSKHNERLEFLGDSILSYVIANALYHRFPRVDEGDMSRMRATLVRGNTLAELAREFELGECLRLGPGELKSGGFRRESILADTVEALIGGVFLDSDIQTVEKLILNWYQTRLDEISPGDKQKDPKTRLQEYLQGRHLPLPTYLVVQVRGEAHDQEFTIHCQVSGLSEPVVGTGSSRRKAEQAAAEQALKKLELE</sequence>
<gene>
    <name evidence="1" type="primary">rnc</name>
    <name type="ordered locus">SFV_2630</name>
</gene>
<organism>
    <name type="scientific">Shigella flexneri serotype 5b (strain 8401)</name>
    <dbReference type="NCBI Taxonomy" id="373384"/>
    <lineage>
        <taxon>Bacteria</taxon>
        <taxon>Pseudomonadati</taxon>
        <taxon>Pseudomonadota</taxon>
        <taxon>Gammaproteobacteria</taxon>
        <taxon>Enterobacterales</taxon>
        <taxon>Enterobacteriaceae</taxon>
        <taxon>Shigella</taxon>
    </lineage>
</organism>
<name>RNC_SHIF8</name>
<feature type="chain" id="PRO_1000075822" description="Ribonuclease 3">
    <location>
        <begin position="1"/>
        <end position="226"/>
    </location>
</feature>
<feature type="domain" description="RNase III" evidence="1">
    <location>
        <begin position="6"/>
        <end position="128"/>
    </location>
</feature>
<feature type="domain" description="DRBM" evidence="1">
    <location>
        <begin position="155"/>
        <end position="225"/>
    </location>
</feature>
<feature type="active site" evidence="1">
    <location>
        <position position="45"/>
    </location>
</feature>
<feature type="active site" evidence="1">
    <location>
        <position position="117"/>
    </location>
</feature>
<feature type="binding site" evidence="1">
    <location>
        <position position="41"/>
    </location>
    <ligand>
        <name>Mg(2+)</name>
        <dbReference type="ChEBI" id="CHEBI:18420"/>
    </ligand>
</feature>
<feature type="binding site" evidence="1">
    <location>
        <position position="114"/>
    </location>
    <ligand>
        <name>Mg(2+)</name>
        <dbReference type="ChEBI" id="CHEBI:18420"/>
    </ligand>
</feature>
<feature type="binding site" evidence="1">
    <location>
        <position position="117"/>
    </location>
    <ligand>
        <name>Mg(2+)</name>
        <dbReference type="ChEBI" id="CHEBI:18420"/>
    </ligand>
</feature>
<evidence type="ECO:0000255" key="1">
    <source>
        <dbReference type="HAMAP-Rule" id="MF_00104"/>
    </source>
</evidence>
<keyword id="KW-0963">Cytoplasm</keyword>
<keyword id="KW-0255">Endonuclease</keyword>
<keyword id="KW-0378">Hydrolase</keyword>
<keyword id="KW-0460">Magnesium</keyword>
<keyword id="KW-0479">Metal-binding</keyword>
<keyword id="KW-0507">mRNA processing</keyword>
<keyword id="KW-0540">Nuclease</keyword>
<keyword id="KW-0694">RNA-binding</keyword>
<keyword id="KW-0698">rRNA processing</keyword>
<keyword id="KW-0699">rRNA-binding</keyword>
<keyword id="KW-0819">tRNA processing</keyword>
<proteinExistence type="inferred from homology"/>
<comment type="function">
    <text evidence="1">Digests double-stranded RNA. Involved in the processing of primary rRNA transcript to yield the immediate precursors to the large and small rRNAs (23S and 16S). Processes some mRNAs, and tRNAs when they are encoded in the rRNA operon. Processes pre-crRNA and tracrRNA of type II CRISPR loci if present in the organism.</text>
</comment>
<comment type="catalytic activity">
    <reaction evidence="1">
        <text>Endonucleolytic cleavage to 5'-phosphomonoester.</text>
        <dbReference type="EC" id="3.1.26.3"/>
    </reaction>
</comment>
<comment type="cofactor">
    <cofactor evidence="1">
        <name>Mg(2+)</name>
        <dbReference type="ChEBI" id="CHEBI:18420"/>
    </cofactor>
</comment>
<comment type="subunit">
    <text evidence="1">Homodimer.</text>
</comment>
<comment type="subcellular location">
    <subcellularLocation>
        <location evidence="1">Cytoplasm</location>
    </subcellularLocation>
</comment>
<comment type="similarity">
    <text evidence="1">Belongs to the ribonuclease III family.</text>
</comment>